<sequence>MSVALSIPLLSLPEDMREALAAAAGPVYSGDRFRRQLLQTPCSGVACIGDYVSQACIATLSTAWTGPLILVVDGKTRRESWRDMVVPQGFRVHRVRSPPGSLSLEAYTTICKLMEEYGRHVVFVEGEEDLIALAALDCGIDWTVVYGLPGVGGVVVHRCLRKPGLENSSVLAFKPGTGVHHQSSP</sequence>
<comment type="function">
    <text evidence="1">Catalyzes the GTP-dependent phosphorylation of the 3'-hydroxyl group of dephosphocoenzyme A to form coenzyme A (CoA).</text>
</comment>
<comment type="catalytic activity">
    <reaction evidence="1">
        <text>3'-dephospho-CoA + GTP = GDP + CoA + H(+)</text>
        <dbReference type="Rhea" id="RHEA:61156"/>
        <dbReference type="ChEBI" id="CHEBI:15378"/>
        <dbReference type="ChEBI" id="CHEBI:37565"/>
        <dbReference type="ChEBI" id="CHEBI:57287"/>
        <dbReference type="ChEBI" id="CHEBI:57328"/>
        <dbReference type="ChEBI" id="CHEBI:58189"/>
        <dbReference type="EC" id="2.7.1.237"/>
    </reaction>
</comment>
<comment type="pathway">
    <text evidence="1">Cofactor biosynthesis; coenzyme A biosynthesis.</text>
</comment>
<comment type="similarity">
    <text evidence="1">Belongs to the GTP-dependent DPCK family.</text>
</comment>
<organism>
    <name type="scientific">Aeropyrum pernix (strain ATCC 700893 / DSM 11879 / JCM 9820 / NBRC 100138 / K1)</name>
    <dbReference type="NCBI Taxonomy" id="272557"/>
    <lineage>
        <taxon>Archaea</taxon>
        <taxon>Thermoproteota</taxon>
        <taxon>Thermoprotei</taxon>
        <taxon>Desulfurococcales</taxon>
        <taxon>Desulfurococcaceae</taxon>
        <taxon>Aeropyrum</taxon>
    </lineage>
</organism>
<reference key="1">
    <citation type="journal article" date="1999" name="DNA Res.">
        <title>Complete genome sequence of an aerobic hyper-thermophilic crenarchaeon, Aeropyrum pernix K1.</title>
        <authorList>
            <person name="Kawarabayasi Y."/>
            <person name="Hino Y."/>
            <person name="Horikawa H."/>
            <person name="Yamazaki S."/>
            <person name="Haikawa Y."/>
            <person name="Jin-no K."/>
            <person name="Takahashi M."/>
            <person name="Sekine M."/>
            <person name="Baba S."/>
            <person name="Ankai A."/>
            <person name="Kosugi H."/>
            <person name="Hosoyama A."/>
            <person name="Fukui S."/>
            <person name="Nagai Y."/>
            <person name="Nishijima K."/>
            <person name="Nakazawa H."/>
            <person name="Takamiya M."/>
            <person name="Masuda S."/>
            <person name="Funahashi T."/>
            <person name="Tanaka T."/>
            <person name="Kudoh Y."/>
            <person name="Yamazaki J."/>
            <person name="Kushida N."/>
            <person name="Oguchi A."/>
            <person name="Aoki K."/>
            <person name="Kubota K."/>
            <person name="Nakamura Y."/>
            <person name="Nomura N."/>
            <person name="Sako Y."/>
            <person name="Kikuchi H."/>
        </authorList>
    </citation>
    <scope>NUCLEOTIDE SEQUENCE [LARGE SCALE GENOMIC DNA]</scope>
    <source>
        <strain>ATCC 700893 / DSM 11879 / JCM 9820 / NBRC 100138 / K1</strain>
    </source>
</reference>
<name>DPCKG_AERPE</name>
<gene>
    <name type="ordered locus">APE_0256</name>
</gene>
<feature type="chain" id="PRO_0000137605" description="GTP-dependent dephospho-CoA kinase">
    <location>
        <begin position="1"/>
        <end position="185"/>
    </location>
</feature>
<feature type="binding site" evidence="1">
    <location>
        <position position="50"/>
    </location>
    <ligand>
        <name>GTP</name>
        <dbReference type="ChEBI" id="CHEBI:37565"/>
    </ligand>
</feature>
<feature type="binding site" evidence="1">
    <location>
        <position position="52"/>
    </location>
    <ligand>
        <name>GTP</name>
        <dbReference type="ChEBI" id="CHEBI:37565"/>
    </ligand>
</feature>
<feature type="binding site" evidence="1">
    <location>
        <position position="73"/>
    </location>
    <ligand>
        <name>GTP</name>
        <dbReference type="ChEBI" id="CHEBI:37565"/>
    </ligand>
</feature>
<feature type="binding site" evidence="1">
    <location>
        <position position="75"/>
    </location>
    <ligand>
        <name>GTP</name>
        <dbReference type="ChEBI" id="CHEBI:37565"/>
    </ligand>
</feature>
<feature type="binding site" evidence="1">
    <location>
        <position position="128"/>
    </location>
    <ligand>
        <name>GTP</name>
        <dbReference type="ChEBI" id="CHEBI:37565"/>
    </ligand>
</feature>
<accession>Q9YFJ2</accession>
<keyword id="KW-0173">Coenzyme A biosynthesis</keyword>
<keyword id="KW-0342">GTP-binding</keyword>
<keyword id="KW-0418">Kinase</keyword>
<keyword id="KW-0547">Nucleotide-binding</keyword>
<keyword id="KW-1185">Reference proteome</keyword>
<keyword id="KW-0808">Transferase</keyword>
<proteinExistence type="inferred from homology"/>
<evidence type="ECO:0000255" key="1">
    <source>
        <dbReference type="HAMAP-Rule" id="MF_00590"/>
    </source>
</evidence>
<protein>
    <recommendedName>
        <fullName evidence="1">GTP-dependent dephospho-CoA kinase</fullName>
        <ecNumber evidence="1">2.7.1.237</ecNumber>
    </recommendedName>
    <alternativeName>
        <fullName evidence="1">Dephospho-coenzyme A kinase</fullName>
        <shortName evidence="1">DPCK</shortName>
    </alternativeName>
</protein>
<dbReference type="EC" id="2.7.1.237" evidence="1"/>
<dbReference type="EMBL" id="BA000002">
    <property type="protein sequence ID" value="BAA79169.1"/>
    <property type="molecule type" value="Genomic_DNA"/>
</dbReference>
<dbReference type="PIR" id="G72783">
    <property type="entry name" value="G72783"/>
</dbReference>
<dbReference type="RefSeq" id="WP_010865605.1">
    <property type="nucleotide sequence ID" value="NC_000854.2"/>
</dbReference>
<dbReference type="SMR" id="Q9YFJ2"/>
<dbReference type="STRING" id="272557.APE_0256"/>
<dbReference type="EnsemblBacteria" id="BAA79169">
    <property type="protein sequence ID" value="BAA79169"/>
    <property type="gene ID" value="APE_0256"/>
</dbReference>
<dbReference type="GeneID" id="1445767"/>
<dbReference type="KEGG" id="ape:APE_0256"/>
<dbReference type="eggNOG" id="arCOG04076">
    <property type="taxonomic scope" value="Archaea"/>
</dbReference>
<dbReference type="UniPathway" id="UPA00241"/>
<dbReference type="Proteomes" id="UP000002518">
    <property type="component" value="Chromosome"/>
</dbReference>
<dbReference type="GO" id="GO:0005525">
    <property type="term" value="F:GTP binding"/>
    <property type="evidence" value="ECO:0007669"/>
    <property type="project" value="UniProtKB-UniRule"/>
</dbReference>
<dbReference type="GO" id="GO:0016301">
    <property type="term" value="F:kinase activity"/>
    <property type="evidence" value="ECO:0007669"/>
    <property type="project" value="UniProtKB-UniRule"/>
</dbReference>
<dbReference type="GO" id="GO:0015937">
    <property type="term" value="P:coenzyme A biosynthetic process"/>
    <property type="evidence" value="ECO:0007669"/>
    <property type="project" value="UniProtKB-UniRule"/>
</dbReference>
<dbReference type="HAMAP" id="MF_00590">
    <property type="entry name" value="Dephospho_CoA_kinase_GTP_dep"/>
    <property type="match status" value="1"/>
</dbReference>
<dbReference type="InterPro" id="IPR007164">
    <property type="entry name" value="GTP-dep_dephospho-CoA_kin"/>
</dbReference>
<dbReference type="PANTHER" id="PTHR40732:SF1">
    <property type="entry name" value="GTP-DEPENDENT DEPHOSPHO-COA KINASE"/>
    <property type="match status" value="1"/>
</dbReference>
<dbReference type="PANTHER" id="PTHR40732">
    <property type="entry name" value="UPF0218 PROTEIN TK1697"/>
    <property type="match status" value="1"/>
</dbReference>
<dbReference type="Pfam" id="PF04019">
    <property type="entry name" value="DUF359"/>
    <property type="match status" value="1"/>
</dbReference>
<dbReference type="PIRSF" id="PIRSF006533">
    <property type="entry name" value="UCP006533"/>
    <property type="match status" value="1"/>
</dbReference>